<evidence type="ECO:0000250" key="1"/>
<evidence type="ECO:0000305" key="2"/>
<comment type="function">
    <text evidence="1">Transaldolase is important for the balance of metabolites in the pentose-phosphate pathway.</text>
</comment>
<comment type="catalytic activity">
    <reaction>
        <text>D-sedoheptulose 7-phosphate + D-glyceraldehyde 3-phosphate = D-erythrose 4-phosphate + beta-D-fructose 6-phosphate</text>
        <dbReference type="Rhea" id="RHEA:17053"/>
        <dbReference type="ChEBI" id="CHEBI:16897"/>
        <dbReference type="ChEBI" id="CHEBI:57483"/>
        <dbReference type="ChEBI" id="CHEBI:57634"/>
        <dbReference type="ChEBI" id="CHEBI:59776"/>
        <dbReference type="EC" id="2.2.1.2"/>
    </reaction>
</comment>
<comment type="pathway">
    <text>Carbohydrate degradation; pentose phosphate pathway; D-glyceraldehyde 3-phosphate and beta-D-fructose 6-phosphate from D-ribose 5-phosphate and D-xylulose 5-phosphate (non-oxidative stage): step 2/3.</text>
</comment>
<comment type="subunit">
    <text evidence="1">Homodimer.</text>
</comment>
<comment type="subcellular location">
    <subcellularLocation>
        <location evidence="1">Cytoplasm</location>
    </subcellularLocation>
</comment>
<comment type="similarity">
    <text evidence="2">Belongs to the transaldolase family. Type 1 subfamily.</text>
</comment>
<name>TALA_PASMU</name>
<organism>
    <name type="scientific">Pasteurella multocida (strain Pm70)</name>
    <dbReference type="NCBI Taxonomy" id="272843"/>
    <lineage>
        <taxon>Bacteria</taxon>
        <taxon>Pseudomonadati</taxon>
        <taxon>Pseudomonadota</taxon>
        <taxon>Gammaproteobacteria</taxon>
        <taxon>Pasteurellales</taxon>
        <taxon>Pasteurellaceae</taxon>
        <taxon>Pasteurella</taxon>
    </lineage>
</organism>
<reference key="1">
    <citation type="journal article" date="2001" name="Proc. Natl. Acad. Sci. U.S.A.">
        <title>Complete genomic sequence of Pasteurella multocida Pm70.</title>
        <authorList>
            <person name="May B.J."/>
            <person name="Zhang Q."/>
            <person name="Li L.L."/>
            <person name="Paustian M.L."/>
            <person name="Whittam T.S."/>
            <person name="Kapur V."/>
        </authorList>
    </citation>
    <scope>NUCLEOTIDE SEQUENCE [LARGE SCALE GENOMIC DNA]</scope>
    <source>
        <strain>Pm70</strain>
    </source>
</reference>
<proteinExistence type="inferred from homology"/>
<keyword id="KW-0963">Cytoplasm</keyword>
<keyword id="KW-0570">Pentose shunt</keyword>
<keyword id="KW-1185">Reference proteome</keyword>
<keyword id="KW-0704">Schiff base</keyword>
<keyword id="KW-0808">Transferase</keyword>
<accession>Q9CKL0</accession>
<gene>
    <name type="primary">talA</name>
    <name type="synonym">tal_1</name>
    <name type="ordered locus">PM1602</name>
</gene>
<sequence>MTTQLDSLRNMTVVVADTGDIEAIKKYQPEDATTNPSLILSASALPQYASLIDEAIAYAKSKSNCSKQQLIDAEDKLAVNIGLEILKIVPGRISTEVDARLSYDTQATIEKAKKLIALYNEAGISNDRILIKIASTWQGIRAAEELEKQGINCNLTLLFSEAQARACAEAGVYLISPFVGRILDWYKANSDKKDYAPAEDPGVISVTKIYNYYKQHGYNTIVMGASFRNVGEITELAGCDRLTIAPALLKELQENNAPLERKLSYTGEVKAKPQPLTEAEFYWQHNSDAMAVEKLADGIRKFAADQEKLEAMLLTKF</sequence>
<protein>
    <recommendedName>
        <fullName>Transaldolase A</fullName>
        <ecNumber>2.2.1.2</ecNumber>
    </recommendedName>
</protein>
<dbReference type="EC" id="2.2.1.2"/>
<dbReference type="EMBL" id="AE004439">
    <property type="protein sequence ID" value="AAK03686.1"/>
    <property type="molecule type" value="Genomic_DNA"/>
</dbReference>
<dbReference type="SMR" id="Q9CKL0"/>
<dbReference type="STRING" id="272843.PM1602"/>
<dbReference type="EnsemblBacteria" id="AAK03686">
    <property type="protein sequence ID" value="AAK03686"/>
    <property type="gene ID" value="PM1602"/>
</dbReference>
<dbReference type="KEGG" id="pmu:PM1602"/>
<dbReference type="PATRIC" id="fig|272843.6.peg.1621"/>
<dbReference type="HOGENOM" id="CLU_047470_0_1_6"/>
<dbReference type="OrthoDB" id="9809101at2"/>
<dbReference type="UniPathway" id="UPA00115">
    <property type="reaction ID" value="UER00414"/>
</dbReference>
<dbReference type="Proteomes" id="UP000000809">
    <property type="component" value="Chromosome"/>
</dbReference>
<dbReference type="GO" id="GO:0005829">
    <property type="term" value="C:cytosol"/>
    <property type="evidence" value="ECO:0007669"/>
    <property type="project" value="TreeGrafter"/>
</dbReference>
<dbReference type="GO" id="GO:0004801">
    <property type="term" value="F:transaldolase activity"/>
    <property type="evidence" value="ECO:0000250"/>
    <property type="project" value="UniProtKB"/>
</dbReference>
<dbReference type="GO" id="GO:0005975">
    <property type="term" value="P:carbohydrate metabolic process"/>
    <property type="evidence" value="ECO:0007669"/>
    <property type="project" value="InterPro"/>
</dbReference>
<dbReference type="GO" id="GO:0006098">
    <property type="term" value="P:pentose-phosphate shunt"/>
    <property type="evidence" value="ECO:0007669"/>
    <property type="project" value="UniProtKB-UniRule"/>
</dbReference>
<dbReference type="CDD" id="cd00957">
    <property type="entry name" value="Transaldolase_TalAB"/>
    <property type="match status" value="1"/>
</dbReference>
<dbReference type="FunFam" id="3.20.20.70:FF:000002">
    <property type="entry name" value="Transaldolase"/>
    <property type="match status" value="1"/>
</dbReference>
<dbReference type="Gene3D" id="3.20.20.70">
    <property type="entry name" value="Aldolase class I"/>
    <property type="match status" value="1"/>
</dbReference>
<dbReference type="HAMAP" id="MF_00492">
    <property type="entry name" value="Transaldolase_1"/>
    <property type="match status" value="1"/>
</dbReference>
<dbReference type="InterPro" id="IPR013785">
    <property type="entry name" value="Aldolase_TIM"/>
</dbReference>
<dbReference type="InterPro" id="IPR001585">
    <property type="entry name" value="TAL/FSA"/>
</dbReference>
<dbReference type="InterPro" id="IPR004730">
    <property type="entry name" value="Transaldolase_1"/>
</dbReference>
<dbReference type="InterPro" id="IPR018225">
    <property type="entry name" value="Transaldolase_AS"/>
</dbReference>
<dbReference type="NCBIfam" id="NF009001">
    <property type="entry name" value="PRK12346.1"/>
    <property type="match status" value="1"/>
</dbReference>
<dbReference type="NCBIfam" id="TIGR00874">
    <property type="entry name" value="talAB"/>
    <property type="match status" value="1"/>
</dbReference>
<dbReference type="PANTHER" id="PTHR10683">
    <property type="entry name" value="TRANSALDOLASE"/>
    <property type="match status" value="1"/>
</dbReference>
<dbReference type="PANTHER" id="PTHR10683:SF18">
    <property type="entry name" value="TRANSALDOLASE"/>
    <property type="match status" value="1"/>
</dbReference>
<dbReference type="Pfam" id="PF00923">
    <property type="entry name" value="TAL_FSA"/>
    <property type="match status" value="1"/>
</dbReference>
<dbReference type="SUPFAM" id="SSF51569">
    <property type="entry name" value="Aldolase"/>
    <property type="match status" value="1"/>
</dbReference>
<dbReference type="PROSITE" id="PS01054">
    <property type="entry name" value="TRANSALDOLASE_1"/>
    <property type="match status" value="1"/>
</dbReference>
<dbReference type="PROSITE" id="PS00958">
    <property type="entry name" value="TRANSALDOLASE_2"/>
    <property type="match status" value="1"/>
</dbReference>
<feature type="chain" id="PRO_0000173601" description="Transaldolase A">
    <location>
        <begin position="1"/>
        <end position="317"/>
    </location>
</feature>
<feature type="active site" description="Schiff-base intermediate with substrate" evidence="1">
    <location>
        <position position="132"/>
    </location>
</feature>